<gene>
    <name evidence="2" type="primary">dgoD</name>
    <name type="ordered locus">EcolC_0011</name>
</gene>
<sequence length="382" mass="42523">MKITKITTYRLPPRWMFLKIETDEGVVGWGEPVIEGRARTVEAAVHELGDYLIGQDPSRINDLWQVMYRAGFYRGGPILMSAIAGIDQALWDIKGKVLNAPVWQLMGGLVRDKIKAYSWVGGDRPADVIDGIKTLREIGFDTFKLNGCEELGLIDNSRAVDAAVNTVAQIREAFGNQIEFGLDFHGRVSAPMAKVLIKELEPYRPLFIEEPVLAEQAEYYPKLAAQTHIPLAAGERMFSRFDFKRVLEAGGISILQPDLSHAGGITECYKIAGMAEAYDVTLAPHCPLGPIALAACLHIDFVSYNAVLQEQSMGIHYNKGAELLDFVKNKEDFSMVGGFFKPLTKPGLGVEIDEAKVIEFSKNAPDWRNPLWRHEDNSVAEW</sequence>
<comment type="function">
    <text evidence="2">Catalyzes the dehydration of D-galactonate to 2-keto-3-deoxy-D-galactonate.</text>
</comment>
<comment type="catalytic activity">
    <reaction evidence="2">
        <text>D-galactonate = 2-dehydro-3-deoxy-D-galactonate + H2O</text>
        <dbReference type="Rhea" id="RHEA:18649"/>
        <dbReference type="ChEBI" id="CHEBI:12931"/>
        <dbReference type="ChEBI" id="CHEBI:15377"/>
        <dbReference type="ChEBI" id="CHEBI:57989"/>
        <dbReference type="EC" id="4.2.1.6"/>
    </reaction>
</comment>
<comment type="cofactor">
    <cofactor evidence="2">
        <name>Mg(2+)</name>
        <dbReference type="ChEBI" id="CHEBI:18420"/>
    </cofactor>
    <text evidence="2">Binds 1 Mg(2+) ion per subunit.</text>
</comment>
<comment type="pathway">
    <text evidence="2">Carbohydrate acid metabolism; D-galactonate degradation; D-glyceraldehyde 3-phosphate and pyruvate from D-galactonate: step 1/3.</text>
</comment>
<comment type="miscellaneous">
    <text evidence="2">Reaction proceeds via an anti dehydration.</text>
</comment>
<comment type="similarity">
    <text evidence="2">Belongs to the mandelate racemase/muconate lactonizing enzyme family. GalD subfamily.</text>
</comment>
<organism>
    <name type="scientific">Escherichia coli (strain ATCC 8739 / DSM 1576 / NBRC 3972 / NCIMB 8545 / WDCM 00012 / Crooks)</name>
    <dbReference type="NCBI Taxonomy" id="481805"/>
    <lineage>
        <taxon>Bacteria</taxon>
        <taxon>Pseudomonadati</taxon>
        <taxon>Pseudomonadota</taxon>
        <taxon>Gammaproteobacteria</taxon>
        <taxon>Enterobacterales</taxon>
        <taxon>Enterobacteriaceae</taxon>
        <taxon>Escherichia</taxon>
    </lineage>
</organism>
<proteinExistence type="inferred from homology"/>
<reference key="1">
    <citation type="submission" date="2008-02" db="EMBL/GenBank/DDBJ databases">
        <title>Complete sequence of Escherichia coli C str. ATCC 8739.</title>
        <authorList>
            <person name="Copeland A."/>
            <person name="Lucas S."/>
            <person name="Lapidus A."/>
            <person name="Glavina del Rio T."/>
            <person name="Dalin E."/>
            <person name="Tice H."/>
            <person name="Bruce D."/>
            <person name="Goodwin L."/>
            <person name="Pitluck S."/>
            <person name="Kiss H."/>
            <person name="Brettin T."/>
            <person name="Detter J.C."/>
            <person name="Han C."/>
            <person name="Kuske C.R."/>
            <person name="Schmutz J."/>
            <person name="Larimer F."/>
            <person name="Land M."/>
            <person name="Hauser L."/>
            <person name="Kyrpides N."/>
            <person name="Mikhailova N."/>
            <person name="Ingram L."/>
            <person name="Richardson P."/>
        </authorList>
    </citation>
    <scope>NUCLEOTIDE SEQUENCE [LARGE SCALE GENOMIC DNA]</scope>
    <source>
        <strain>ATCC 8739 / DSM 1576 / NBRC 3972 / NCIMB 8545 / WDCM 00012 / Crooks</strain>
    </source>
</reference>
<accession>B1IYQ2</accession>
<name>DGOD_ECOLC</name>
<evidence type="ECO:0000250" key="1"/>
<evidence type="ECO:0000255" key="2">
    <source>
        <dbReference type="HAMAP-Rule" id="MF_01289"/>
    </source>
</evidence>
<protein>
    <recommendedName>
        <fullName evidence="2">D-galactonate dehydratase</fullName>
        <shortName evidence="2">GalD</shortName>
        <ecNumber evidence="2">4.2.1.6</ecNumber>
    </recommendedName>
</protein>
<keyword id="KW-0456">Lyase</keyword>
<keyword id="KW-0460">Magnesium</keyword>
<keyword id="KW-0479">Metal-binding</keyword>
<dbReference type="EC" id="4.2.1.6" evidence="2"/>
<dbReference type="EMBL" id="CP000946">
    <property type="protein sequence ID" value="ACA75699.1"/>
    <property type="molecule type" value="Genomic_DNA"/>
</dbReference>
<dbReference type="RefSeq" id="WP_000705001.1">
    <property type="nucleotide sequence ID" value="NZ_MTFT01000013.1"/>
</dbReference>
<dbReference type="SMR" id="B1IYQ2"/>
<dbReference type="GeneID" id="75205406"/>
<dbReference type="KEGG" id="ecl:EcolC_0011"/>
<dbReference type="HOGENOM" id="CLU_030273_3_2_6"/>
<dbReference type="UniPathway" id="UPA00081">
    <property type="reaction ID" value="UER00518"/>
</dbReference>
<dbReference type="GO" id="GO:0008869">
    <property type="term" value="F:galactonate dehydratase activity"/>
    <property type="evidence" value="ECO:0007669"/>
    <property type="project" value="UniProtKB-UniRule"/>
</dbReference>
<dbReference type="GO" id="GO:0000287">
    <property type="term" value="F:magnesium ion binding"/>
    <property type="evidence" value="ECO:0007669"/>
    <property type="project" value="UniProtKB-UniRule"/>
</dbReference>
<dbReference type="GO" id="GO:0009063">
    <property type="term" value="P:amino acid catabolic process"/>
    <property type="evidence" value="ECO:0007669"/>
    <property type="project" value="InterPro"/>
</dbReference>
<dbReference type="GO" id="GO:0034194">
    <property type="term" value="P:D-galactonate catabolic process"/>
    <property type="evidence" value="ECO:0007669"/>
    <property type="project" value="UniProtKB-UniRule"/>
</dbReference>
<dbReference type="CDD" id="cd03325">
    <property type="entry name" value="D-galactonate_dehydratase"/>
    <property type="match status" value="1"/>
</dbReference>
<dbReference type="FunFam" id="3.20.20.120:FF:000008">
    <property type="entry name" value="D-galactonate dehydratase"/>
    <property type="match status" value="1"/>
</dbReference>
<dbReference type="FunFam" id="3.30.390.10:FF:000003">
    <property type="entry name" value="D-galactonate dehydratase"/>
    <property type="match status" value="1"/>
</dbReference>
<dbReference type="Gene3D" id="3.20.20.120">
    <property type="entry name" value="Enolase-like C-terminal domain"/>
    <property type="match status" value="1"/>
</dbReference>
<dbReference type="Gene3D" id="3.30.390.10">
    <property type="entry name" value="Enolase-like, N-terminal domain"/>
    <property type="match status" value="1"/>
</dbReference>
<dbReference type="HAMAP" id="MF_01289">
    <property type="entry name" value="Galacton_dehydrat"/>
    <property type="match status" value="1"/>
</dbReference>
<dbReference type="InterPro" id="IPR034593">
    <property type="entry name" value="DgoD-like"/>
</dbReference>
<dbReference type="InterPro" id="IPR036849">
    <property type="entry name" value="Enolase-like_C_sf"/>
</dbReference>
<dbReference type="InterPro" id="IPR029017">
    <property type="entry name" value="Enolase-like_N"/>
</dbReference>
<dbReference type="InterPro" id="IPR029065">
    <property type="entry name" value="Enolase_C-like"/>
</dbReference>
<dbReference type="InterPro" id="IPR023592">
    <property type="entry name" value="Galactonate_deHydtase"/>
</dbReference>
<dbReference type="InterPro" id="IPR018110">
    <property type="entry name" value="Mandel_Rmase/mucon_lact_enz_CS"/>
</dbReference>
<dbReference type="InterPro" id="IPR013342">
    <property type="entry name" value="Mandelate_racemase_C"/>
</dbReference>
<dbReference type="InterPro" id="IPR013341">
    <property type="entry name" value="Mandelate_racemase_N_dom"/>
</dbReference>
<dbReference type="NCBIfam" id="NF010624">
    <property type="entry name" value="PRK14017.1"/>
    <property type="match status" value="1"/>
</dbReference>
<dbReference type="PANTHER" id="PTHR48080:SF2">
    <property type="entry name" value="D-GALACTONATE DEHYDRATASE"/>
    <property type="match status" value="1"/>
</dbReference>
<dbReference type="PANTHER" id="PTHR48080">
    <property type="entry name" value="D-GALACTONATE DEHYDRATASE-RELATED"/>
    <property type="match status" value="1"/>
</dbReference>
<dbReference type="Pfam" id="PF13378">
    <property type="entry name" value="MR_MLE_C"/>
    <property type="match status" value="1"/>
</dbReference>
<dbReference type="Pfam" id="PF02746">
    <property type="entry name" value="MR_MLE_N"/>
    <property type="match status" value="1"/>
</dbReference>
<dbReference type="SFLD" id="SFLDF00003">
    <property type="entry name" value="D-galactonate_dehydratase"/>
    <property type="match status" value="1"/>
</dbReference>
<dbReference type="SFLD" id="SFLDS00001">
    <property type="entry name" value="Enolase"/>
    <property type="match status" value="1"/>
</dbReference>
<dbReference type="SMART" id="SM00922">
    <property type="entry name" value="MR_MLE"/>
    <property type="match status" value="1"/>
</dbReference>
<dbReference type="SUPFAM" id="SSF51604">
    <property type="entry name" value="Enolase C-terminal domain-like"/>
    <property type="match status" value="1"/>
</dbReference>
<dbReference type="SUPFAM" id="SSF54826">
    <property type="entry name" value="Enolase N-terminal domain-like"/>
    <property type="match status" value="1"/>
</dbReference>
<dbReference type="PROSITE" id="PS00908">
    <property type="entry name" value="MR_MLE_1"/>
    <property type="match status" value="1"/>
</dbReference>
<dbReference type="PROSITE" id="PS00909">
    <property type="entry name" value="MR_MLE_2"/>
    <property type="match status" value="1"/>
</dbReference>
<feature type="chain" id="PRO_0000352622" description="D-galactonate dehydratase">
    <location>
        <begin position="1"/>
        <end position="382"/>
    </location>
</feature>
<feature type="active site" description="Proton donor" evidence="1">
    <location>
        <position position="185"/>
    </location>
</feature>
<feature type="active site" description="Proton acceptor" evidence="1">
    <location>
        <position position="285"/>
    </location>
</feature>
<feature type="binding site" evidence="2">
    <location>
        <position position="183"/>
    </location>
    <ligand>
        <name>Mg(2+)</name>
        <dbReference type="ChEBI" id="CHEBI:18420"/>
    </ligand>
</feature>
<feature type="binding site" evidence="2">
    <location>
        <position position="209"/>
    </location>
    <ligand>
        <name>Mg(2+)</name>
        <dbReference type="ChEBI" id="CHEBI:18420"/>
    </ligand>
</feature>
<feature type="binding site" evidence="2">
    <location>
        <position position="235"/>
    </location>
    <ligand>
        <name>Mg(2+)</name>
        <dbReference type="ChEBI" id="CHEBI:18420"/>
    </ligand>
</feature>
<feature type="site" description="Increases basicity of active site His" evidence="2">
    <location>
        <position position="258"/>
    </location>
</feature>
<feature type="site" description="Transition state stabilizer" evidence="2">
    <location>
        <position position="310"/>
    </location>
</feature>